<keyword id="KW-0963">Cytoplasm</keyword>
<keyword id="KW-0493">Microtubule</keyword>
<keyword id="KW-0539">Nucleus</keyword>
<keyword id="KW-1185">Reference proteome</keyword>
<evidence type="ECO:0000250" key="1"/>
<evidence type="ECO:0000256" key="2">
    <source>
        <dbReference type="SAM" id="MobiDB-lite"/>
    </source>
</evidence>
<evidence type="ECO:0000269" key="3">
    <source>
    </source>
</evidence>
<evidence type="ECO:0000305" key="4"/>
<dbReference type="EMBL" id="AB013389">
    <property type="protein sequence ID" value="BAB10917.1"/>
    <property type="status" value="ALT_SEQ"/>
    <property type="molecule type" value="Genomic_DNA"/>
</dbReference>
<dbReference type="EMBL" id="CP002688">
    <property type="protein sequence ID" value="AED98210.1"/>
    <property type="molecule type" value="Genomic_DNA"/>
</dbReference>
<dbReference type="EMBL" id="BT003998">
    <property type="protein sequence ID" value="AAO42037.1"/>
    <property type="molecule type" value="mRNA"/>
</dbReference>
<dbReference type="EMBL" id="BT005683">
    <property type="protein sequence ID" value="AAO64103.1"/>
    <property type="molecule type" value="mRNA"/>
</dbReference>
<dbReference type="EMBL" id="AY086393">
    <property type="protein sequence ID" value="AAM64460.1"/>
    <property type="molecule type" value="mRNA"/>
</dbReference>
<dbReference type="RefSeq" id="NP_569033.1">
    <property type="nucleotide sequence ID" value="NM_126039.4"/>
</dbReference>
<dbReference type="SMR" id="Q8LCV1"/>
<dbReference type="BioGRID" id="22015">
    <property type="interactions" value="3"/>
</dbReference>
<dbReference type="FunCoup" id="Q8LCV1">
    <property type="interactions" value="557"/>
</dbReference>
<dbReference type="IntAct" id="Q8LCV1">
    <property type="interactions" value="2"/>
</dbReference>
<dbReference type="STRING" id="3702.Q8LCV1"/>
<dbReference type="PaxDb" id="3702-AT5G66410.1"/>
<dbReference type="ProteomicsDB" id="226202"/>
<dbReference type="EnsemblPlants" id="AT5G66410.1">
    <property type="protein sequence ID" value="AT5G66410.1"/>
    <property type="gene ID" value="AT5G66410"/>
</dbReference>
<dbReference type="GeneID" id="836773"/>
<dbReference type="Gramene" id="AT5G66410.1">
    <property type="protein sequence ID" value="AT5G66410.1"/>
    <property type="gene ID" value="AT5G66410"/>
</dbReference>
<dbReference type="KEGG" id="ath:AT5G66410"/>
<dbReference type="Araport" id="AT5G66410"/>
<dbReference type="TAIR" id="AT5G66410">
    <property type="gene designation" value="PLP3B"/>
</dbReference>
<dbReference type="eggNOG" id="KOG1672">
    <property type="taxonomic scope" value="Eukaryota"/>
</dbReference>
<dbReference type="HOGENOM" id="CLU_072378_3_0_1"/>
<dbReference type="InParanoid" id="Q8LCV1"/>
<dbReference type="OMA" id="HFFHPEF"/>
<dbReference type="OrthoDB" id="10257948at2759"/>
<dbReference type="PhylomeDB" id="Q8LCV1"/>
<dbReference type="PRO" id="PR:Q8LCV1"/>
<dbReference type="Proteomes" id="UP000006548">
    <property type="component" value="Chromosome 5"/>
</dbReference>
<dbReference type="ExpressionAtlas" id="Q8LCV1">
    <property type="expression patterns" value="baseline and differential"/>
</dbReference>
<dbReference type="GO" id="GO:0005737">
    <property type="term" value="C:cytoplasm"/>
    <property type="evidence" value="ECO:0007669"/>
    <property type="project" value="UniProtKB-SubCell"/>
</dbReference>
<dbReference type="GO" id="GO:0005874">
    <property type="term" value="C:microtubule"/>
    <property type="evidence" value="ECO:0007669"/>
    <property type="project" value="UniProtKB-KW"/>
</dbReference>
<dbReference type="GO" id="GO:0005634">
    <property type="term" value="C:nucleus"/>
    <property type="evidence" value="ECO:0007669"/>
    <property type="project" value="UniProtKB-SubCell"/>
</dbReference>
<dbReference type="GO" id="GO:0048487">
    <property type="term" value="F:beta-tubulin binding"/>
    <property type="evidence" value="ECO:0000250"/>
    <property type="project" value="TAIR"/>
</dbReference>
<dbReference type="GO" id="GO:0043622">
    <property type="term" value="P:cortical microtubule organization"/>
    <property type="evidence" value="ECO:0000316"/>
    <property type="project" value="TAIR"/>
</dbReference>
<dbReference type="GO" id="GO:0000911">
    <property type="term" value="P:cytokinesis by cell plate formation"/>
    <property type="evidence" value="ECO:0000316"/>
    <property type="project" value="TAIR"/>
</dbReference>
<dbReference type="CDD" id="cd02989">
    <property type="entry name" value="Phd_like_TxnDC9"/>
    <property type="match status" value="1"/>
</dbReference>
<dbReference type="Gene3D" id="3.40.30.10">
    <property type="entry name" value="Glutaredoxin"/>
    <property type="match status" value="1"/>
</dbReference>
<dbReference type="InterPro" id="IPR036249">
    <property type="entry name" value="Thioredoxin-like_sf"/>
</dbReference>
<dbReference type="InterPro" id="IPR013766">
    <property type="entry name" value="Thioredoxin_domain"/>
</dbReference>
<dbReference type="PANTHER" id="PTHR21148">
    <property type="entry name" value="THIOREDOXIN DOMAIN-CONTAINING PROTEIN 9"/>
    <property type="match status" value="1"/>
</dbReference>
<dbReference type="Pfam" id="PF00085">
    <property type="entry name" value="Thioredoxin"/>
    <property type="match status" value="1"/>
</dbReference>
<dbReference type="SUPFAM" id="SSF52833">
    <property type="entry name" value="Thioredoxin-like"/>
    <property type="match status" value="1"/>
</dbReference>
<organism>
    <name type="scientific">Arabidopsis thaliana</name>
    <name type="common">Mouse-ear cress</name>
    <dbReference type="NCBI Taxonomy" id="3702"/>
    <lineage>
        <taxon>Eukaryota</taxon>
        <taxon>Viridiplantae</taxon>
        <taxon>Streptophyta</taxon>
        <taxon>Embryophyta</taxon>
        <taxon>Tracheophyta</taxon>
        <taxon>Spermatophyta</taxon>
        <taxon>Magnoliopsida</taxon>
        <taxon>eudicotyledons</taxon>
        <taxon>Gunneridae</taxon>
        <taxon>Pentapetalae</taxon>
        <taxon>rosids</taxon>
        <taxon>malvids</taxon>
        <taxon>Brassicales</taxon>
        <taxon>Brassicaceae</taxon>
        <taxon>Camelineae</taxon>
        <taxon>Arabidopsis</taxon>
    </lineage>
</organism>
<feature type="chain" id="PRO_0000428877" description="Thioredoxin domain-containing protein PLP3B">
    <location>
        <begin position="1"/>
        <end position="230"/>
    </location>
</feature>
<feature type="domain" description="Thioredoxin">
    <location>
        <begin position="89"/>
        <end position="173"/>
    </location>
</feature>
<feature type="region of interest" description="Disordered" evidence="2">
    <location>
        <begin position="199"/>
        <end position="230"/>
    </location>
</feature>
<feature type="compositionally biased region" description="Polar residues" evidence="2">
    <location>
        <begin position="220"/>
        <end position="230"/>
    </location>
</feature>
<reference key="1">
    <citation type="journal article" date="1998" name="DNA Res.">
        <title>Structural analysis of Arabidopsis thaliana chromosome 5. VI. Sequence features of the regions of 1,367,185 bp covered by 19 physically assigned P1 and TAC clones.</title>
        <authorList>
            <person name="Kotani H."/>
            <person name="Nakamura Y."/>
            <person name="Sato S."/>
            <person name="Asamizu E."/>
            <person name="Kaneko T."/>
            <person name="Miyajima N."/>
            <person name="Tabata S."/>
        </authorList>
    </citation>
    <scope>NUCLEOTIDE SEQUENCE [LARGE SCALE GENOMIC DNA]</scope>
    <source>
        <strain>cv. Columbia</strain>
    </source>
</reference>
<reference key="2">
    <citation type="journal article" date="2017" name="Plant J.">
        <title>Araport11: a complete reannotation of the Arabidopsis thaliana reference genome.</title>
        <authorList>
            <person name="Cheng C.Y."/>
            <person name="Krishnakumar V."/>
            <person name="Chan A.P."/>
            <person name="Thibaud-Nissen F."/>
            <person name="Schobel S."/>
            <person name="Town C.D."/>
        </authorList>
    </citation>
    <scope>GENOME REANNOTATION</scope>
    <source>
        <strain>cv. Columbia</strain>
    </source>
</reference>
<reference key="3">
    <citation type="journal article" date="2003" name="Science">
        <title>Empirical analysis of transcriptional activity in the Arabidopsis genome.</title>
        <authorList>
            <person name="Yamada K."/>
            <person name="Lim J."/>
            <person name="Dale J.M."/>
            <person name="Chen H."/>
            <person name="Shinn P."/>
            <person name="Palm C.J."/>
            <person name="Southwick A.M."/>
            <person name="Wu H.C."/>
            <person name="Kim C.J."/>
            <person name="Nguyen M."/>
            <person name="Pham P.K."/>
            <person name="Cheuk R.F."/>
            <person name="Karlin-Newmann G."/>
            <person name="Liu S.X."/>
            <person name="Lam B."/>
            <person name="Sakano H."/>
            <person name="Wu T."/>
            <person name="Yu G."/>
            <person name="Miranda M."/>
            <person name="Quach H.L."/>
            <person name="Tripp M."/>
            <person name="Chang C.H."/>
            <person name="Lee J.M."/>
            <person name="Toriumi M.J."/>
            <person name="Chan M.M."/>
            <person name="Tang C.C."/>
            <person name="Onodera C.S."/>
            <person name="Deng J.M."/>
            <person name="Akiyama K."/>
            <person name="Ansari Y."/>
            <person name="Arakawa T."/>
            <person name="Banh J."/>
            <person name="Banno F."/>
            <person name="Bowser L."/>
            <person name="Brooks S.Y."/>
            <person name="Carninci P."/>
            <person name="Chao Q."/>
            <person name="Choy N."/>
            <person name="Enju A."/>
            <person name="Goldsmith A.D."/>
            <person name="Gurjal M."/>
            <person name="Hansen N.F."/>
            <person name="Hayashizaki Y."/>
            <person name="Johnson-Hopson C."/>
            <person name="Hsuan V.W."/>
            <person name="Iida K."/>
            <person name="Karnes M."/>
            <person name="Khan S."/>
            <person name="Koesema E."/>
            <person name="Ishida J."/>
            <person name="Jiang P.X."/>
            <person name="Jones T."/>
            <person name="Kawai J."/>
            <person name="Kamiya A."/>
            <person name="Meyers C."/>
            <person name="Nakajima M."/>
            <person name="Narusaka M."/>
            <person name="Seki M."/>
            <person name="Sakurai T."/>
            <person name="Satou M."/>
            <person name="Tamse R."/>
            <person name="Vaysberg M."/>
            <person name="Wallender E.K."/>
            <person name="Wong C."/>
            <person name="Yamamura Y."/>
            <person name="Yuan S."/>
            <person name="Shinozaki K."/>
            <person name="Davis R.W."/>
            <person name="Theologis A."/>
            <person name="Ecker J.R."/>
        </authorList>
    </citation>
    <scope>NUCLEOTIDE SEQUENCE [LARGE SCALE MRNA]</scope>
    <source>
        <strain>cv. Columbia</strain>
    </source>
</reference>
<reference key="4">
    <citation type="submission" date="2002-03" db="EMBL/GenBank/DDBJ databases">
        <title>Full-length cDNA from Arabidopsis thaliana.</title>
        <authorList>
            <person name="Brover V.V."/>
            <person name="Troukhan M.E."/>
            <person name="Alexandrov N.A."/>
            <person name="Lu Y.-P."/>
            <person name="Flavell R.B."/>
            <person name="Feldmann K.A."/>
        </authorList>
    </citation>
    <scope>NUCLEOTIDE SEQUENCE [LARGE SCALE MRNA]</scope>
</reference>
<reference key="5">
    <citation type="journal article" date="2008" name="Plant Cell">
        <title>Phosducin-Like Protein 3 is required for microtubule-dependent steps of cell division but not for meristem growth in Arabidopsis.</title>
        <authorList>
            <person name="Castellano M.M."/>
            <person name="Sablowski R."/>
        </authorList>
    </citation>
    <scope>FUNCTION</scope>
    <scope>DISRUPTION PHENOTYPE</scope>
    <scope>TISSUE SPECIFICITY</scope>
</reference>
<gene>
    <name type="primary">PLP3B</name>
    <name type="ordered locus">At5g66410</name>
    <name type="ORF">K1F13.6</name>
</gene>
<proteinExistence type="evidence at transcript level"/>
<name>PLP3B_ARATH</name>
<comment type="function">
    <text evidence="3">Tubulin-binding protein involved in microtubule formation.</text>
</comment>
<comment type="subunit">
    <text evidence="1">Interacts with TUBB2, TUBB3, TUBB4 and TUBB5.</text>
</comment>
<comment type="subcellular location">
    <subcellularLocation>
        <location evidence="1">Cytoplasm</location>
    </subcellularLocation>
    <subcellularLocation>
        <location evidence="1">Nucleus</location>
    </subcellularLocation>
</comment>
<comment type="tissue specificity">
    <text evidence="3">Expressed in roots, cotyledons, leaves, stems and flowers.</text>
</comment>
<comment type="disruption phenotype">
    <text evidence="3">No visible phenotype under normal growth conditions, but plants with reduced levels of both PLP3A and PLP3B show defects in cytokinesis, cortical microtubule array formation, oriented cell growth, and maintenance of proper ploidy.</text>
</comment>
<comment type="similarity">
    <text evidence="4">Belongs to the phosducin family.</text>
</comment>
<comment type="sequence caution" evidence="4">
    <conflict type="erroneous gene model prediction">
        <sequence resource="EMBL-CDS" id="BAB10917"/>
    </conflict>
</comment>
<accession>Q8LCV1</accession>
<accession>Q9FJZ8</accession>
<protein>
    <recommendedName>
        <fullName>Thioredoxin domain-containing protein PLP3B</fullName>
    </recommendedName>
    <alternativeName>
        <fullName>Phosducin-like protein 3B</fullName>
    </alternativeName>
</protein>
<sequence>MDPDTVKSTLSNLAFGNVLAAAARDYKKEVLANEKAQGSRPVNEEVDLDELMDDPELEKLHADRIAALRREVEKREAFKRQGHGEYREVSEGDFLGEVTRSEKVICHFYHKEFYRCKIMDKHLKTLAPRHVDTKFIKMDAENAPFFVTKLAIKTLPCVILFSKGIAMDRLVGFQDLGAKDDFSTTKLENLLVKKGMLSEKRKEEDEEDYEYQESIRRSVRSSANVDSDSD</sequence>